<comment type="function">
    <text evidence="1">Granulocyte/macrophage colony-stimulating factors are cytokines that act in hematopoiesis by controlling the production, differentiation, and function of 2 related white cell populations of the blood, the granulocytes and the monocytes-macrophages. This CSF induces granulocytes (By similarity).</text>
</comment>
<comment type="subunit">
    <text>Monomer.</text>
</comment>
<comment type="subcellular location">
    <subcellularLocation>
        <location>Secreted</location>
    </subcellularLocation>
</comment>
<comment type="PTM">
    <text evidence="1">O-glycosylated.</text>
</comment>
<comment type="similarity">
    <text evidence="3">Belongs to the IL-6 superfamily.</text>
</comment>
<protein>
    <recommendedName>
        <fullName>Granulocyte colony-stimulating factor</fullName>
        <shortName>G-CSF</shortName>
    </recommendedName>
</protein>
<dbReference type="EMBL" id="Y08558">
    <property type="protein sequence ID" value="CAA69853.1"/>
    <property type="molecule type" value="mRNA"/>
</dbReference>
<dbReference type="PIR" id="T09255">
    <property type="entry name" value="T09255"/>
</dbReference>
<dbReference type="SMR" id="O02708"/>
<dbReference type="STRING" id="9685.ENSFCAP00000037077"/>
<dbReference type="GlyCosmos" id="O02708">
    <property type="glycosylation" value="1 site, No reported glycans"/>
</dbReference>
<dbReference type="PaxDb" id="9685-ENSFCAP00000013908"/>
<dbReference type="eggNOG" id="ENOG502SCNA">
    <property type="taxonomic scope" value="Eukaryota"/>
</dbReference>
<dbReference type="InParanoid" id="O02708"/>
<dbReference type="TreeFam" id="TF337698"/>
<dbReference type="Proteomes" id="UP000011712">
    <property type="component" value="Unplaced"/>
</dbReference>
<dbReference type="GO" id="GO:0005615">
    <property type="term" value="C:extracellular space"/>
    <property type="evidence" value="ECO:0000318"/>
    <property type="project" value="GO_Central"/>
</dbReference>
<dbReference type="GO" id="GO:0005125">
    <property type="term" value="F:cytokine activity"/>
    <property type="evidence" value="ECO:0000318"/>
    <property type="project" value="GO_Central"/>
</dbReference>
<dbReference type="GO" id="GO:0005130">
    <property type="term" value="F:granulocyte colony-stimulating factor receptor binding"/>
    <property type="evidence" value="ECO:0000318"/>
    <property type="project" value="GO_Central"/>
</dbReference>
<dbReference type="GO" id="GO:0008083">
    <property type="term" value="F:growth factor activity"/>
    <property type="evidence" value="ECO:0000318"/>
    <property type="project" value="GO_Central"/>
</dbReference>
<dbReference type="GO" id="GO:0006955">
    <property type="term" value="P:immune response"/>
    <property type="evidence" value="ECO:0007669"/>
    <property type="project" value="InterPro"/>
</dbReference>
<dbReference type="GO" id="GO:0008284">
    <property type="term" value="P:positive regulation of cell population proliferation"/>
    <property type="evidence" value="ECO:0000318"/>
    <property type="project" value="GO_Central"/>
</dbReference>
<dbReference type="GO" id="GO:0045639">
    <property type="term" value="P:positive regulation of myeloid cell differentiation"/>
    <property type="evidence" value="ECO:0000318"/>
    <property type="project" value="GO_Central"/>
</dbReference>
<dbReference type="FunFam" id="1.20.1250.10:FF:000021">
    <property type="entry name" value="Granulocyte colony-stimulating factor"/>
    <property type="match status" value="1"/>
</dbReference>
<dbReference type="Gene3D" id="1.20.1250.10">
    <property type="match status" value="1"/>
</dbReference>
<dbReference type="InterPro" id="IPR009079">
    <property type="entry name" value="4_helix_cytokine-like_core"/>
</dbReference>
<dbReference type="InterPro" id="IPR040117">
    <property type="entry name" value="GCSF/MGF"/>
</dbReference>
<dbReference type="InterPro" id="IPR030474">
    <property type="entry name" value="IL-6/GCSF/MGF"/>
</dbReference>
<dbReference type="InterPro" id="IPR030473">
    <property type="entry name" value="IL6/GCSF/MGF_CS"/>
</dbReference>
<dbReference type="PANTHER" id="PTHR10511">
    <property type="entry name" value="GRANULOCYTE COLONY-STIMULATING FACTOR"/>
    <property type="match status" value="1"/>
</dbReference>
<dbReference type="PANTHER" id="PTHR10511:SF2">
    <property type="entry name" value="GRANULOCYTE COLONY-STIMULATING FACTOR"/>
    <property type="match status" value="1"/>
</dbReference>
<dbReference type="Pfam" id="PF16647">
    <property type="entry name" value="GCSF"/>
    <property type="match status" value="1"/>
</dbReference>
<dbReference type="PIRSF" id="PIRSF001935">
    <property type="entry name" value="IL6_MGF_GCSF"/>
    <property type="match status" value="1"/>
</dbReference>
<dbReference type="PRINTS" id="PR00433">
    <property type="entry name" value="IL6GCSFMGF"/>
</dbReference>
<dbReference type="SMART" id="SM00126">
    <property type="entry name" value="IL6"/>
    <property type="match status" value="1"/>
</dbReference>
<dbReference type="SUPFAM" id="SSF47266">
    <property type="entry name" value="4-helical cytokines"/>
    <property type="match status" value="1"/>
</dbReference>
<dbReference type="PROSITE" id="PS00254">
    <property type="entry name" value="INTERLEUKIN_6"/>
    <property type="match status" value="1"/>
</dbReference>
<gene>
    <name type="primary">CSF3</name>
</gene>
<name>CSF3_FELCA</name>
<keyword id="KW-0202">Cytokine</keyword>
<keyword id="KW-1015">Disulfide bond</keyword>
<keyword id="KW-0325">Glycoprotein</keyword>
<keyword id="KW-0339">Growth factor</keyword>
<keyword id="KW-1185">Reference proteome</keyword>
<keyword id="KW-0964">Secreted</keyword>
<keyword id="KW-0732">Signal</keyword>
<accession>O02708</accession>
<sequence length="194" mass="21154">KLMALQLLLWHSALWMVQEATPLGPTSSLPQSFLLKCLEQVRKVQADGTALQERLCAAHKLCHPEELVLLGHALGIPQAPLSSCSSQALQLTGCLRQLHSGLFLYQGLLQALAGISPELAPTLDMLQLDITDFAINIWQQMEDVGMAPAVPPTQGTMPTFTSAFQRRAGGTLVASNLQSFLEVAYRALRHFTKP</sequence>
<feature type="signal peptide" evidence="2">
    <location>
        <begin position="1" status="less than"/>
        <end position="20"/>
    </location>
</feature>
<feature type="chain" id="PRO_0000015569" description="Granulocyte colony-stimulating factor">
    <location>
        <begin position="21"/>
        <end position="194"/>
    </location>
</feature>
<feature type="glycosylation site" description="O-linked (GalNAc...) threonine" evidence="1">
    <location>
        <position position="153"/>
    </location>
</feature>
<feature type="disulfide bond" evidence="1">
    <location>
        <begin position="56"/>
        <end position="62"/>
    </location>
</feature>
<feature type="disulfide bond" evidence="1">
    <location>
        <begin position="84"/>
        <end position="94"/>
    </location>
</feature>
<feature type="non-terminal residue">
    <location>
        <position position="1"/>
    </location>
</feature>
<evidence type="ECO:0000250" key="1"/>
<evidence type="ECO:0000255" key="2"/>
<evidence type="ECO:0000305" key="3"/>
<proteinExistence type="evidence at transcript level"/>
<reference key="1">
    <citation type="journal article" date="2001" name="Cytokine">
        <title>Isolation, nucleotide sequence and expression of a cDNA encoding feline granulocyte colony-stimulating factor.</title>
        <authorList>
            <person name="Dunham S.P."/>
            <person name="Onions D.E."/>
        </authorList>
    </citation>
    <scope>NUCLEOTIDE SEQUENCE [MRNA]</scope>
    <source>
        <strain>European shorthair</strain>
        <tissue>Lung</tissue>
    </source>
</reference>
<organism>
    <name type="scientific">Felis catus</name>
    <name type="common">Cat</name>
    <name type="synonym">Felis silvestris catus</name>
    <dbReference type="NCBI Taxonomy" id="9685"/>
    <lineage>
        <taxon>Eukaryota</taxon>
        <taxon>Metazoa</taxon>
        <taxon>Chordata</taxon>
        <taxon>Craniata</taxon>
        <taxon>Vertebrata</taxon>
        <taxon>Euteleostomi</taxon>
        <taxon>Mammalia</taxon>
        <taxon>Eutheria</taxon>
        <taxon>Laurasiatheria</taxon>
        <taxon>Carnivora</taxon>
        <taxon>Feliformia</taxon>
        <taxon>Felidae</taxon>
        <taxon>Felinae</taxon>
        <taxon>Felis</taxon>
    </lineage>
</organism>